<proteinExistence type="inferred from homology"/>
<sequence length="771" mass="83338">MAHITSWHYGNAIALLVSLAPGALSLNTFPDCSSGPLSKLAVCDTSLDVTTRAQSLVNAMTFEEKVNNTQYNSPGVPRLGLPAYNWWSEALHGVAGSPGVEFADSGPFSYATSFPQPILLGATFDDDLIKQVATVVSTEGRAFGNAGRSGLDFWTPNINPFRDARWGRGQETPGEDPLHVSRYVYHLVDGLQNGIGPANPKVVATCKHFAAYDLEDWNGVVRHSFNAEVSTQDLSEFYLPPFKSCARDARVDAVMCSYNALNGVPACADSYLLQTILREHWKWDEPGRWITSDCGAIDDIYNGHNFTTTPAEAAATALNAGTDLDCGTVFPKYLGQAADEGLYSNQTLDRALVRLYSSLVKLGYFDPAEDQPYRSIGWTDVDTPAAEALAHKAAGEGIVLLKNDKTLPLKAKGTLALIGPYANATKQMQGNYEGPAKYIRTLLWAATQAGYDVKYAAGTAINTNSTAGFDAALSAAKQADVVVYAGGIDNTIEAEGRDRTTIAWPGNQVNLIDQLSKIGKPLVVVQFGGGQVDDSSLLSNPRVNALLWAGYPSQEGGSAIFDILTGKTAPAGRLPVTQYPADYVNQVPMTDMALRPGSNTPGRTYRWYDKAVLPFGFGLHYTTFKISWPRRALGPYNTAALVSRSPKNVPIDRAAFDTFHIQVTNTGKTTSDYVALLFLKTTDAGPKPYPLKTLVGYTRAKQIKPGEKRSVDIEVSLGSLARTAENGDLVLYPGRYTLEVDVGESQYPTASFTVTGKETILDSFPQPPKTR</sequence>
<accession>Q4WFI6</accession>
<organism>
    <name type="scientific">Aspergillus fumigatus (strain ATCC MYA-4609 / CBS 101355 / FGSC A1100 / Af293)</name>
    <name type="common">Neosartorya fumigata</name>
    <dbReference type="NCBI Taxonomy" id="330879"/>
    <lineage>
        <taxon>Eukaryota</taxon>
        <taxon>Fungi</taxon>
        <taxon>Dikarya</taxon>
        <taxon>Ascomycota</taxon>
        <taxon>Pezizomycotina</taxon>
        <taxon>Eurotiomycetes</taxon>
        <taxon>Eurotiomycetidae</taxon>
        <taxon>Eurotiales</taxon>
        <taxon>Aspergillaceae</taxon>
        <taxon>Aspergillus</taxon>
        <taxon>Aspergillus subgen. Fumigati</taxon>
    </lineage>
</organism>
<reference key="1">
    <citation type="journal article" date="2005" name="Nature">
        <title>Genomic sequence of the pathogenic and allergenic filamentous fungus Aspergillus fumigatus.</title>
        <authorList>
            <person name="Nierman W.C."/>
            <person name="Pain A."/>
            <person name="Anderson M.J."/>
            <person name="Wortman J.R."/>
            <person name="Kim H.S."/>
            <person name="Arroyo J."/>
            <person name="Berriman M."/>
            <person name="Abe K."/>
            <person name="Archer D.B."/>
            <person name="Bermejo C."/>
            <person name="Bennett J.W."/>
            <person name="Bowyer P."/>
            <person name="Chen D."/>
            <person name="Collins M."/>
            <person name="Coulsen R."/>
            <person name="Davies R."/>
            <person name="Dyer P.S."/>
            <person name="Farman M.L."/>
            <person name="Fedorova N."/>
            <person name="Fedorova N.D."/>
            <person name="Feldblyum T.V."/>
            <person name="Fischer R."/>
            <person name="Fosker N."/>
            <person name="Fraser A."/>
            <person name="Garcia J.L."/>
            <person name="Garcia M.J."/>
            <person name="Goble A."/>
            <person name="Goldman G.H."/>
            <person name="Gomi K."/>
            <person name="Griffith-Jones S."/>
            <person name="Gwilliam R."/>
            <person name="Haas B.J."/>
            <person name="Haas H."/>
            <person name="Harris D.E."/>
            <person name="Horiuchi H."/>
            <person name="Huang J."/>
            <person name="Humphray S."/>
            <person name="Jimenez J."/>
            <person name="Keller N."/>
            <person name="Khouri H."/>
            <person name="Kitamoto K."/>
            <person name="Kobayashi T."/>
            <person name="Konzack S."/>
            <person name="Kulkarni R."/>
            <person name="Kumagai T."/>
            <person name="Lafton A."/>
            <person name="Latge J.-P."/>
            <person name="Li W."/>
            <person name="Lord A."/>
            <person name="Lu C."/>
            <person name="Majoros W.H."/>
            <person name="May G.S."/>
            <person name="Miller B.L."/>
            <person name="Mohamoud Y."/>
            <person name="Molina M."/>
            <person name="Monod M."/>
            <person name="Mouyna I."/>
            <person name="Mulligan S."/>
            <person name="Murphy L.D."/>
            <person name="O'Neil S."/>
            <person name="Paulsen I."/>
            <person name="Penalva M.A."/>
            <person name="Pertea M."/>
            <person name="Price C."/>
            <person name="Pritchard B.L."/>
            <person name="Quail M.A."/>
            <person name="Rabbinowitsch E."/>
            <person name="Rawlins N."/>
            <person name="Rajandream M.A."/>
            <person name="Reichard U."/>
            <person name="Renauld H."/>
            <person name="Robson G.D."/>
            <person name="Rodriguez de Cordoba S."/>
            <person name="Rodriguez-Pena J.M."/>
            <person name="Ronning C.M."/>
            <person name="Rutter S."/>
            <person name="Salzberg S.L."/>
            <person name="Sanchez M."/>
            <person name="Sanchez-Ferrero J.C."/>
            <person name="Saunders D."/>
            <person name="Seeger K."/>
            <person name="Squares R."/>
            <person name="Squares S."/>
            <person name="Takeuchi M."/>
            <person name="Tekaia F."/>
            <person name="Turner G."/>
            <person name="Vazquez de Aldana C.R."/>
            <person name="Weidman J."/>
            <person name="White O."/>
            <person name="Woodward J.R."/>
            <person name="Yu J.-H."/>
            <person name="Fraser C.M."/>
            <person name="Galagan J.E."/>
            <person name="Asai K."/>
            <person name="Machida M."/>
            <person name="Hall N."/>
            <person name="Barrell B.G."/>
            <person name="Denning D.W."/>
        </authorList>
    </citation>
    <scope>NUCLEOTIDE SEQUENCE [LARGE SCALE GENOMIC DNA]</scope>
    <source>
        <strain>ATCC MYA-4609 / CBS 101355 / FGSC A1100 / Af293</strain>
    </source>
</reference>
<dbReference type="EC" id="3.2.1.37"/>
<dbReference type="EMBL" id="AAHF01000010">
    <property type="protein sequence ID" value="EAL86491.1"/>
    <property type="molecule type" value="Genomic_DNA"/>
</dbReference>
<dbReference type="RefSeq" id="XP_748529.1">
    <property type="nucleotide sequence ID" value="XM_743436.1"/>
</dbReference>
<dbReference type="SMR" id="Q4WFI6"/>
<dbReference type="STRING" id="330879.Q4WFI6"/>
<dbReference type="GlyCosmos" id="Q4WFI6">
    <property type="glycosylation" value="5 sites, No reported glycans"/>
</dbReference>
<dbReference type="EnsemblFungi" id="EAL86491">
    <property type="protein sequence ID" value="EAL86491"/>
    <property type="gene ID" value="AFUA_3G02090"/>
</dbReference>
<dbReference type="GeneID" id="3506129"/>
<dbReference type="KEGG" id="afm:AFUA_3G02090"/>
<dbReference type="VEuPathDB" id="FungiDB:Afu3g02090"/>
<dbReference type="eggNOG" id="ENOG502QQ55">
    <property type="taxonomic scope" value="Eukaryota"/>
</dbReference>
<dbReference type="HOGENOM" id="CLU_004542_5_3_1"/>
<dbReference type="InParanoid" id="Q4WFI6"/>
<dbReference type="OMA" id="WGFKGHV"/>
<dbReference type="OrthoDB" id="47059at2759"/>
<dbReference type="UniPathway" id="UPA00114"/>
<dbReference type="Proteomes" id="UP000002530">
    <property type="component" value="Chromosome 3"/>
</dbReference>
<dbReference type="GO" id="GO:0005576">
    <property type="term" value="C:extracellular region"/>
    <property type="evidence" value="ECO:0007669"/>
    <property type="project" value="UniProtKB-SubCell"/>
</dbReference>
<dbReference type="GO" id="GO:0046556">
    <property type="term" value="F:alpha-L-arabinofuranosidase activity"/>
    <property type="evidence" value="ECO:0000318"/>
    <property type="project" value="GO_Central"/>
</dbReference>
<dbReference type="GO" id="GO:0009044">
    <property type="term" value="F:xylan 1,4-beta-xylosidase activity"/>
    <property type="evidence" value="ECO:0000318"/>
    <property type="project" value="GO_Central"/>
</dbReference>
<dbReference type="GO" id="GO:0031222">
    <property type="term" value="P:arabinan catabolic process"/>
    <property type="evidence" value="ECO:0000318"/>
    <property type="project" value="GO_Central"/>
</dbReference>
<dbReference type="GO" id="GO:0045493">
    <property type="term" value="P:xylan catabolic process"/>
    <property type="evidence" value="ECO:0000318"/>
    <property type="project" value="GO_Central"/>
</dbReference>
<dbReference type="FunFam" id="2.60.40.10:FF:001420">
    <property type="entry name" value="Exo-1,4-beta-xylosidase xlnD"/>
    <property type="match status" value="1"/>
</dbReference>
<dbReference type="FunFam" id="3.40.50.1700:FF:000007">
    <property type="entry name" value="Exo-1,4-beta-xylosidase xlnD"/>
    <property type="match status" value="1"/>
</dbReference>
<dbReference type="FunFam" id="3.20.20.300:FF:000013">
    <property type="entry name" value="Probable exo-1,4-beta-xylosidase xlnD"/>
    <property type="match status" value="1"/>
</dbReference>
<dbReference type="Gene3D" id="3.40.50.1700">
    <property type="entry name" value="Glycoside hydrolase family 3 C-terminal domain"/>
    <property type="match status" value="1"/>
</dbReference>
<dbReference type="Gene3D" id="3.20.20.300">
    <property type="entry name" value="Glycoside hydrolase, family 3, N-terminal domain"/>
    <property type="match status" value="1"/>
</dbReference>
<dbReference type="Gene3D" id="2.60.40.10">
    <property type="entry name" value="Immunoglobulins"/>
    <property type="match status" value="1"/>
</dbReference>
<dbReference type="InterPro" id="IPR044993">
    <property type="entry name" value="BXL"/>
</dbReference>
<dbReference type="InterPro" id="IPR026891">
    <property type="entry name" value="Fn3-like"/>
</dbReference>
<dbReference type="InterPro" id="IPR002772">
    <property type="entry name" value="Glyco_hydro_3_C"/>
</dbReference>
<dbReference type="InterPro" id="IPR036881">
    <property type="entry name" value="Glyco_hydro_3_C_sf"/>
</dbReference>
<dbReference type="InterPro" id="IPR001764">
    <property type="entry name" value="Glyco_hydro_3_N"/>
</dbReference>
<dbReference type="InterPro" id="IPR036962">
    <property type="entry name" value="Glyco_hydro_3_N_sf"/>
</dbReference>
<dbReference type="InterPro" id="IPR017853">
    <property type="entry name" value="Glycoside_hydrolase_SF"/>
</dbReference>
<dbReference type="InterPro" id="IPR013783">
    <property type="entry name" value="Ig-like_fold"/>
</dbReference>
<dbReference type="PANTHER" id="PTHR42721:SF3">
    <property type="entry name" value="BETA-D-XYLOSIDASE 5-RELATED"/>
    <property type="match status" value="1"/>
</dbReference>
<dbReference type="PANTHER" id="PTHR42721">
    <property type="entry name" value="SUGAR HYDROLASE-RELATED"/>
    <property type="match status" value="1"/>
</dbReference>
<dbReference type="Pfam" id="PF14310">
    <property type="entry name" value="Fn3-like"/>
    <property type="match status" value="1"/>
</dbReference>
<dbReference type="Pfam" id="PF00933">
    <property type="entry name" value="Glyco_hydro_3"/>
    <property type="match status" value="1"/>
</dbReference>
<dbReference type="Pfam" id="PF01915">
    <property type="entry name" value="Glyco_hydro_3_C"/>
    <property type="match status" value="1"/>
</dbReference>
<dbReference type="PRINTS" id="PR00133">
    <property type="entry name" value="GLHYDRLASE3"/>
</dbReference>
<dbReference type="SMART" id="SM01217">
    <property type="entry name" value="Fn3_like"/>
    <property type="match status" value="1"/>
</dbReference>
<dbReference type="SUPFAM" id="SSF51445">
    <property type="entry name" value="(Trans)glycosidases"/>
    <property type="match status" value="1"/>
</dbReference>
<dbReference type="SUPFAM" id="SSF52279">
    <property type="entry name" value="Beta-D-glucan exohydrolase, C-terminal domain"/>
    <property type="match status" value="1"/>
</dbReference>
<comment type="function">
    <text evidence="1">Xylan 1,4-beta-xylosidase involved in the hydrolysis of xylan, a major structural heterogeneous polysaccharide found in plant biomass representing the second most abundant polysaccharide in the biosphere, after cellulose.</text>
</comment>
<comment type="catalytic activity">
    <reaction>
        <text>Hydrolysis of (1-&gt;4)-beta-D-xylans, to remove successive D-xylose residues from the non-reducing termini.</text>
        <dbReference type="EC" id="3.2.1.37"/>
    </reaction>
</comment>
<comment type="pathway">
    <text>Glycan degradation; xylan degradation.</text>
</comment>
<comment type="subcellular location">
    <subcellularLocation>
        <location evidence="1">Secreted</location>
    </subcellularLocation>
</comment>
<comment type="similarity">
    <text evidence="3">Belongs to the glycosyl hydrolase 3 family.</text>
</comment>
<gene>
    <name type="primary">bxlB</name>
    <name type="ORF">AFUA_3G02090</name>
</gene>
<feature type="signal peptide" evidence="2">
    <location>
        <begin position="1"/>
        <end position="25"/>
    </location>
</feature>
<feature type="chain" id="PRO_0000394088" description="Probable exo-1,4-beta-xylosidase bxlB">
    <location>
        <begin position="26"/>
        <end position="771"/>
    </location>
</feature>
<feature type="active site" evidence="1">
    <location>
        <position position="293"/>
    </location>
</feature>
<feature type="glycosylation site" description="N-linked (GlcNAc...) asparagine" evidence="2">
    <location>
        <position position="67"/>
    </location>
</feature>
<feature type="glycosylation site" description="N-linked (GlcNAc...) asparagine" evidence="2">
    <location>
        <position position="305"/>
    </location>
</feature>
<feature type="glycosylation site" description="N-linked (GlcNAc...) asparagine" evidence="2">
    <location>
        <position position="345"/>
    </location>
</feature>
<feature type="glycosylation site" description="N-linked (GlcNAc...) asparagine" evidence="2">
    <location>
        <position position="423"/>
    </location>
</feature>
<feature type="glycosylation site" description="N-linked (GlcNAc...) asparagine" evidence="2">
    <location>
        <position position="464"/>
    </location>
</feature>
<keyword id="KW-0119">Carbohydrate metabolism</keyword>
<keyword id="KW-0325">Glycoprotein</keyword>
<keyword id="KW-0326">Glycosidase</keyword>
<keyword id="KW-0378">Hydrolase</keyword>
<keyword id="KW-0624">Polysaccharide degradation</keyword>
<keyword id="KW-1185">Reference proteome</keyword>
<keyword id="KW-0964">Secreted</keyword>
<keyword id="KW-0732">Signal</keyword>
<keyword id="KW-0858">Xylan degradation</keyword>
<name>BXLB_ASPFU</name>
<protein>
    <recommendedName>
        <fullName>Probable exo-1,4-beta-xylosidase bxlB</fullName>
        <ecNumber>3.2.1.37</ecNumber>
    </recommendedName>
    <alternativeName>
        <fullName>1,4-beta-D-xylan xylohydrolase bxlB</fullName>
    </alternativeName>
    <alternativeName>
        <fullName>Beta-xylosidase bxlB</fullName>
    </alternativeName>
    <alternativeName>
        <fullName>Xylobiase bxlB</fullName>
    </alternativeName>
</protein>
<evidence type="ECO:0000250" key="1"/>
<evidence type="ECO:0000255" key="2"/>
<evidence type="ECO:0000305" key="3"/>